<evidence type="ECO:0000305" key="1"/>
<evidence type="ECO:0000305" key="2">
    <source>
    </source>
</evidence>
<name>YBY4_YEAST</name>
<proteinExistence type="uncertain"/>
<comment type="miscellaneous">
    <text evidence="1">Partially overlaps YBR133C.</text>
</comment>
<comment type="caution">
    <text evidence="2">Product of a dubious gene prediction unlikely to encode a functional protein. Because of that it is not part of the S.cerevisiae S288c complete/reference proteome set.</text>
</comment>
<gene>
    <name type="ordered locus">YBR134W</name>
    <name type="ORF">YBR1010</name>
</gene>
<sequence length="133" mass="15524">MIKAWFDTNKYVAMHMQTEPFVYIKIICIKEEERPHNSTHTHTHTLSHTQFEIAPIGLGNRITSHSKYTIFSITHTHCIKPFVSKKYKNTAQRAVSGSICDCLFFFWFSSVQNEGSKNFQIKQYSSPEICFRV</sequence>
<protein>
    <recommendedName>
        <fullName>Putative uncharacterized protein YBR134W</fullName>
    </recommendedName>
</protein>
<organism>
    <name type="scientific">Saccharomyces cerevisiae (strain ATCC 204508 / S288c)</name>
    <name type="common">Baker's yeast</name>
    <dbReference type="NCBI Taxonomy" id="559292"/>
    <lineage>
        <taxon>Eukaryota</taxon>
        <taxon>Fungi</taxon>
        <taxon>Dikarya</taxon>
        <taxon>Ascomycota</taxon>
        <taxon>Saccharomycotina</taxon>
        <taxon>Saccharomycetes</taxon>
        <taxon>Saccharomycetales</taxon>
        <taxon>Saccharomycetaceae</taxon>
        <taxon>Saccharomyces</taxon>
    </lineage>
</organism>
<dbReference type="EMBL" id="X75891">
    <property type="status" value="NOT_ANNOTATED_CDS"/>
    <property type="molecule type" value="Genomic_DNA"/>
</dbReference>
<dbReference type="EMBL" id="Z36002">
    <property type="protein sequence ID" value="CAA85091.1"/>
    <property type="molecule type" value="Genomic_DNA"/>
</dbReference>
<dbReference type="EMBL" id="Z36004">
    <property type="protein sequence ID" value="CAA85093.1"/>
    <property type="molecule type" value="Genomic_DNA"/>
</dbReference>
<dbReference type="PIR" id="S46003">
    <property type="entry name" value="S46003"/>
</dbReference>
<dbReference type="DIP" id="DIP-1174N"/>
<dbReference type="IntAct" id="P38275">
    <property type="interactions" value="3"/>
</dbReference>
<dbReference type="MINT" id="P38275"/>
<dbReference type="STRING" id="4932.YBR134W"/>
<dbReference type="PaxDb" id="4932-YBR134W"/>
<dbReference type="EnsemblFungi" id="YBR134W_mRNA">
    <property type="protein sequence ID" value="YBR134W"/>
    <property type="gene ID" value="YBR134W"/>
</dbReference>
<dbReference type="AGR" id="SGD:S000000338"/>
<dbReference type="SGD" id="S000000338">
    <property type="gene designation" value="YBR134W"/>
</dbReference>
<dbReference type="HOGENOM" id="CLU_1908321_0_0_1"/>
<reference key="1">
    <citation type="journal article" date="1994" name="Yeast">
        <title>The sequence of 29.7 kb from the right arm of chromosome II reveals 13 complete open reading frames, of which ten correspond to new genes.</title>
        <authorList>
            <person name="Becam A.-M."/>
            <person name="Cullin C."/>
            <person name="Grzybowska E."/>
            <person name="Lacroute F."/>
            <person name="Nasr F."/>
            <person name="Ozier-Kalogeropoulos O."/>
            <person name="Palucha A."/>
            <person name="Slonimski P.P."/>
            <person name="Zagulski M."/>
            <person name="Herbert C.J."/>
        </authorList>
    </citation>
    <scope>NUCLEOTIDE SEQUENCE [GENOMIC DNA]</scope>
    <source>
        <strain>ATCC 204508 / S288c</strain>
    </source>
</reference>
<reference key="2">
    <citation type="journal article" date="1994" name="EMBO J.">
        <title>Complete DNA sequence of yeast chromosome II.</title>
        <authorList>
            <person name="Feldmann H."/>
            <person name="Aigle M."/>
            <person name="Aljinovic G."/>
            <person name="Andre B."/>
            <person name="Baclet M.C."/>
            <person name="Barthe C."/>
            <person name="Baur A."/>
            <person name="Becam A.-M."/>
            <person name="Biteau N."/>
            <person name="Boles E."/>
            <person name="Brandt T."/>
            <person name="Brendel M."/>
            <person name="Brueckner M."/>
            <person name="Bussereau F."/>
            <person name="Christiansen C."/>
            <person name="Contreras R."/>
            <person name="Crouzet M."/>
            <person name="Cziepluch C."/>
            <person name="Demolis N."/>
            <person name="Delaveau T."/>
            <person name="Doignon F."/>
            <person name="Domdey H."/>
            <person name="Duesterhus S."/>
            <person name="Dubois E."/>
            <person name="Dujon B."/>
            <person name="El Bakkoury M."/>
            <person name="Entian K.-D."/>
            <person name="Feuermann M."/>
            <person name="Fiers W."/>
            <person name="Fobo G.M."/>
            <person name="Fritz C."/>
            <person name="Gassenhuber J."/>
            <person name="Glansdorff N."/>
            <person name="Goffeau A."/>
            <person name="Grivell L.A."/>
            <person name="de Haan M."/>
            <person name="Hein C."/>
            <person name="Herbert C.J."/>
            <person name="Hollenberg C.P."/>
            <person name="Holmstroem K."/>
            <person name="Jacq C."/>
            <person name="Jacquet M."/>
            <person name="Jauniaux J.-C."/>
            <person name="Jonniaux J.-L."/>
            <person name="Kallesoee T."/>
            <person name="Kiesau P."/>
            <person name="Kirchrath L."/>
            <person name="Koetter P."/>
            <person name="Korol S."/>
            <person name="Liebl S."/>
            <person name="Logghe M."/>
            <person name="Lohan A.J.E."/>
            <person name="Louis E.J."/>
            <person name="Li Z.Y."/>
            <person name="Maat M.J."/>
            <person name="Mallet L."/>
            <person name="Mannhaupt G."/>
            <person name="Messenguy F."/>
            <person name="Miosga T."/>
            <person name="Molemans F."/>
            <person name="Mueller S."/>
            <person name="Nasr F."/>
            <person name="Obermaier B."/>
            <person name="Perea J."/>
            <person name="Pierard A."/>
            <person name="Piravandi E."/>
            <person name="Pohl F.M."/>
            <person name="Pohl T.M."/>
            <person name="Potier S."/>
            <person name="Proft M."/>
            <person name="Purnelle B."/>
            <person name="Ramezani Rad M."/>
            <person name="Rieger M."/>
            <person name="Rose M."/>
            <person name="Schaaff-Gerstenschlaeger I."/>
            <person name="Scherens B."/>
            <person name="Schwarzlose C."/>
            <person name="Skala J."/>
            <person name="Slonimski P.P."/>
            <person name="Smits P.H.M."/>
            <person name="Souciet J.-L."/>
            <person name="Steensma H.Y."/>
            <person name="Stucka R."/>
            <person name="Urrestarazu L.A."/>
            <person name="van der Aart Q.J.M."/>
            <person name="Van Dyck L."/>
            <person name="Vassarotti A."/>
            <person name="Vetter I."/>
            <person name="Vierendeels F."/>
            <person name="Vissers S."/>
            <person name="Wagner G."/>
            <person name="de Wergifosse P."/>
            <person name="Wolfe K.H."/>
            <person name="Zagulski M."/>
            <person name="Zimmermann F.K."/>
            <person name="Mewes H.-W."/>
            <person name="Kleine K."/>
        </authorList>
    </citation>
    <scope>NUCLEOTIDE SEQUENCE [LARGE SCALE GENOMIC DNA]</scope>
    <source>
        <strain>ATCC 204508 / S288c</strain>
    </source>
</reference>
<reference key="3">
    <citation type="journal article" date="2014" name="G3 (Bethesda)">
        <title>The reference genome sequence of Saccharomyces cerevisiae: Then and now.</title>
        <authorList>
            <person name="Engel S.R."/>
            <person name="Dietrich F.S."/>
            <person name="Fisk D.G."/>
            <person name="Binkley G."/>
            <person name="Balakrishnan R."/>
            <person name="Costanzo M.C."/>
            <person name="Dwight S.S."/>
            <person name="Hitz B.C."/>
            <person name="Karra K."/>
            <person name="Nash R.S."/>
            <person name="Weng S."/>
            <person name="Wong E.D."/>
            <person name="Lloyd P."/>
            <person name="Skrzypek M.S."/>
            <person name="Miyasato S.R."/>
            <person name="Simison M."/>
            <person name="Cherry J.M."/>
        </authorList>
    </citation>
    <scope>GENOME REANNOTATION</scope>
    <source>
        <strain>ATCC 204508 / S288c</strain>
    </source>
</reference>
<accession>P38275</accession>
<accession>P89503</accession>
<feature type="chain" id="PRO_0000202492" description="Putative uncharacterized protein YBR134W">
    <location>
        <begin position="1"/>
        <end position="133"/>
    </location>
</feature>